<gene>
    <name evidence="1" type="primary">mutS2</name>
    <name evidence="1" type="synonym">rqcU</name>
    <name type="ordered locus">SPD_0371</name>
</gene>
<organism>
    <name type="scientific">Streptococcus pneumoniae serotype 2 (strain D39 / NCTC 7466)</name>
    <dbReference type="NCBI Taxonomy" id="373153"/>
    <lineage>
        <taxon>Bacteria</taxon>
        <taxon>Bacillati</taxon>
        <taxon>Bacillota</taxon>
        <taxon>Bacilli</taxon>
        <taxon>Lactobacillales</taxon>
        <taxon>Streptococcaceae</taxon>
        <taxon>Streptococcus</taxon>
    </lineage>
</organism>
<feature type="chain" id="PRO_1000093393" description="Endonuclease MutS2">
    <location>
        <begin position="1"/>
        <end position="778"/>
    </location>
</feature>
<feature type="domain" description="Smr" evidence="1">
    <location>
        <begin position="702"/>
        <end position="777"/>
    </location>
</feature>
<feature type="binding site" evidence="1">
    <location>
        <begin position="328"/>
        <end position="335"/>
    </location>
    <ligand>
        <name>ATP</name>
        <dbReference type="ChEBI" id="CHEBI:30616"/>
    </ligand>
</feature>
<protein>
    <recommendedName>
        <fullName evidence="1">Endonuclease MutS2</fullName>
        <ecNumber evidence="1">3.1.-.-</ecNumber>
    </recommendedName>
    <alternativeName>
        <fullName evidence="1">Ribosome-associated protein quality control-upstream factor</fullName>
        <shortName evidence="1">RQC-upstream factor</shortName>
        <shortName evidence="1">RqcU</shortName>
        <ecNumber evidence="1">3.6.4.-</ecNumber>
    </alternativeName>
</protein>
<evidence type="ECO:0000255" key="1">
    <source>
        <dbReference type="HAMAP-Rule" id="MF_00092"/>
    </source>
</evidence>
<dbReference type="EC" id="3.1.-.-" evidence="1"/>
<dbReference type="EC" id="3.6.4.-" evidence="1"/>
<dbReference type="EMBL" id="CP000410">
    <property type="protein sequence ID" value="ABJ55516.1"/>
    <property type="molecule type" value="Genomic_DNA"/>
</dbReference>
<dbReference type="RefSeq" id="WP_001035008.1">
    <property type="nucleotide sequence ID" value="NZ_JAMLJR010000009.1"/>
</dbReference>
<dbReference type="SMR" id="Q04M67"/>
<dbReference type="PaxDb" id="373153-SPD_0371"/>
<dbReference type="KEGG" id="spd:SPD_0371"/>
<dbReference type="eggNOG" id="COG1193">
    <property type="taxonomic scope" value="Bacteria"/>
</dbReference>
<dbReference type="HOGENOM" id="CLU_011252_2_1_9"/>
<dbReference type="BioCyc" id="SPNE373153:G1G6V-408-MONOMER"/>
<dbReference type="Proteomes" id="UP000001452">
    <property type="component" value="Chromosome"/>
</dbReference>
<dbReference type="GO" id="GO:0005524">
    <property type="term" value="F:ATP binding"/>
    <property type="evidence" value="ECO:0007669"/>
    <property type="project" value="UniProtKB-UniRule"/>
</dbReference>
<dbReference type="GO" id="GO:0016887">
    <property type="term" value="F:ATP hydrolysis activity"/>
    <property type="evidence" value="ECO:0007669"/>
    <property type="project" value="InterPro"/>
</dbReference>
<dbReference type="GO" id="GO:0140664">
    <property type="term" value="F:ATP-dependent DNA damage sensor activity"/>
    <property type="evidence" value="ECO:0007669"/>
    <property type="project" value="InterPro"/>
</dbReference>
<dbReference type="GO" id="GO:0004519">
    <property type="term" value="F:endonuclease activity"/>
    <property type="evidence" value="ECO:0007669"/>
    <property type="project" value="UniProtKB-UniRule"/>
</dbReference>
<dbReference type="GO" id="GO:0030983">
    <property type="term" value="F:mismatched DNA binding"/>
    <property type="evidence" value="ECO:0007669"/>
    <property type="project" value="InterPro"/>
</dbReference>
<dbReference type="GO" id="GO:0043023">
    <property type="term" value="F:ribosomal large subunit binding"/>
    <property type="evidence" value="ECO:0007669"/>
    <property type="project" value="UniProtKB-UniRule"/>
</dbReference>
<dbReference type="GO" id="GO:0019843">
    <property type="term" value="F:rRNA binding"/>
    <property type="evidence" value="ECO:0007669"/>
    <property type="project" value="UniProtKB-UniRule"/>
</dbReference>
<dbReference type="GO" id="GO:0006298">
    <property type="term" value="P:mismatch repair"/>
    <property type="evidence" value="ECO:0007669"/>
    <property type="project" value="InterPro"/>
</dbReference>
<dbReference type="GO" id="GO:0045910">
    <property type="term" value="P:negative regulation of DNA recombination"/>
    <property type="evidence" value="ECO:0007669"/>
    <property type="project" value="InterPro"/>
</dbReference>
<dbReference type="GO" id="GO:0072344">
    <property type="term" value="P:rescue of stalled ribosome"/>
    <property type="evidence" value="ECO:0007669"/>
    <property type="project" value="UniProtKB-UniRule"/>
</dbReference>
<dbReference type="FunFam" id="3.30.1370.110:FF:000005">
    <property type="entry name" value="Endonuclease MutS2"/>
    <property type="match status" value="1"/>
</dbReference>
<dbReference type="FunFam" id="3.40.50.300:FF:000830">
    <property type="entry name" value="Endonuclease MutS2"/>
    <property type="match status" value="1"/>
</dbReference>
<dbReference type="Gene3D" id="3.30.1370.110">
    <property type="match status" value="1"/>
</dbReference>
<dbReference type="Gene3D" id="3.40.50.300">
    <property type="entry name" value="P-loop containing nucleotide triphosphate hydrolases"/>
    <property type="match status" value="1"/>
</dbReference>
<dbReference type="HAMAP" id="MF_00092">
    <property type="entry name" value="MutS2"/>
    <property type="match status" value="1"/>
</dbReference>
<dbReference type="InterPro" id="IPR000432">
    <property type="entry name" value="DNA_mismatch_repair_MutS_C"/>
</dbReference>
<dbReference type="InterPro" id="IPR007696">
    <property type="entry name" value="DNA_mismatch_repair_MutS_core"/>
</dbReference>
<dbReference type="InterPro" id="IPR036187">
    <property type="entry name" value="DNA_mismatch_repair_MutS_sf"/>
</dbReference>
<dbReference type="InterPro" id="IPR046893">
    <property type="entry name" value="MSSS"/>
</dbReference>
<dbReference type="InterPro" id="IPR045076">
    <property type="entry name" value="MutS"/>
</dbReference>
<dbReference type="InterPro" id="IPR005747">
    <property type="entry name" value="MutS2"/>
</dbReference>
<dbReference type="InterPro" id="IPR027417">
    <property type="entry name" value="P-loop_NTPase"/>
</dbReference>
<dbReference type="InterPro" id="IPR002625">
    <property type="entry name" value="Smr_dom"/>
</dbReference>
<dbReference type="InterPro" id="IPR036063">
    <property type="entry name" value="Smr_dom_sf"/>
</dbReference>
<dbReference type="NCBIfam" id="TIGR01069">
    <property type="entry name" value="mutS2"/>
    <property type="match status" value="1"/>
</dbReference>
<dbReference type="PANTHER" id="PTHR48466">
    <property type="entry name" value="OS10G0509000 PROTEIN-RELATED"/>
    <property type="match status" value="1"/>
</dbReference>
<dbReference type="PANTHER" id="PTHR48466:SF1">
    <property type="entry name" value="SMR DOMAIN-CONTAINING PROTEIN"/>
    <property type="match status" value="1"/>
</dbReference>
<dbReference type="Pfam" id="PF20297">
    <property type="entry name" value="MSSS"/>
    <property type="match status" value="1"/>
</dbReference>
<dbReference type="Pfam" id="PF00488">
    <property type="entry name" value="MutS_V"/>
    <property type="match status" value="1"/>
</dbReference>
<dbReference type="Pfam" id="PF01713">
    <property type="entry name" value="Smr"/>
    <property type="match status" value="1"/>
</dbReference>
<dbReference type="PIRSF" id="PIRSF005814">
    <property type="entry name" value="MutS_YshD"/>
    <property type="match status" value="1"/>
</dbReference>
<dbReference type="SMART" id="SM00534">
    <property type="entry name" value="MUTSac"/>
    <property type="match status" value="1"/>
</dbReference>
<dbReference type="SMART" id="SM00533">
    <property type="entry name" value="MUTSd"/>
    <property type="match status" value="1"/>
</dbReference>
<dbReference type="SMART" id="SM00463">
    <property type="entry name" value="SMR"/>
    <property type="match status" value="1"/>
</dbReference>
<dbReference type="SUPFAM" id="SSF48334">
    <property type="entry name" value="DNA repair protein MutS, domain III"/>
    <property type="match status" value="1"/>
</dbReference>
<dbReference type="SUPFAM" id="SSF52540">
    <property type="entry name" value="P-loop containing nucleoside triphosphate hydrolases"/>
    <property type="match status" value="1"/>
</dbReference>
<dbReference type="SUPFAM" id="SSF160443">
    <property type="entry name" value="SMR domain-like"/>
    <property type="match status" value="1"/>
</dbReference>
<dbReference type="PROSITE" id="PS00486">
    <property type="entry name" value="DNA_MISMATCH_REPAIR_2"/>
    <property type="match status" value="1"/>
</dbReference>
<dbReference type="PROSITE" id="PS50828">
    <property type="entry name" value="SMR"/>
    <property type="match status" value="1"/>
</dbReference>
<reference key="1">
    <citation type="journal article" date="2007" name="J. Bacteriol.">
        <title>Genome sequence of Avery's virulent serotype 2 strain D39 of Streptococcus pneumoniae and comparison with that of unencapsulated laboratory strain R6.</title>
        <authorList>
            <person name="Lanie J.A."/>
            <person name="Ng W.-L."/>
            <person name="Kazmierczak K.M."/>
            <person name="Andrzejewski T.M."/>
            <person name="Davidsen T.M."/>
            <person name="Wayne K.J."/>
            <person name="Tettelin H."/>
            <person name="Glass J.I."/>
            <person name="Winkler M.E."/>
        </authorList>
    </citation>
    <scope>NUCLEOTIDE SEQUENCE [LARGE SCALE GENOMIC DNA]</scope>
    <source>
        <strain>D39 / NCTC 7466</strain>
    </source>
</reference>
<keyword id="KW-0067">ATP-binding</keyword>
<keyword id="KW-0238">DNA-binding</keyword>
<keyword id="KW-0255">Endonuclease</keyword>
<keyword id="KW-0378">Hydrolase</keyword>
<keyword id="KW-0540">Nuclease</keyword>
<keyword id="KW-0547">Nucleotide-binding</keyword>
<keyword id="KW-1185">Reference proteome</keyword>
<keyword id="KW-0694">RNA-binding</keyword>
<keyword id="KW-0699">rRNA-binding</keyword>
<accession>Q04M67</accession>
<proteinExistence type="inferred from homology"/>
<name>MUTS2_STRP2</name>
<comment type="function">
    <text evidence="1">Endonuclease that is involved in the suppression of homologous recombination and thus may have a key role in the control of bacterial genetic diversity.</text>
</comment>
<comment type="function">
    <text evidence="1">Acts as a ribosome collision sensor, splitting the ribosome into its 2 subunits. Detects stalled/collided 70S ribosomes which it binds and splits by an ATP-hydrolysis driven conformational change. Acts upstream of the ribosome quality control system (RQC), a ribosome-associated complex that mediates the extraction of incompletely synthesized nascent chains from stalled ribosomes and their subsequent degradation. Probably generates substrates for RQC.</text>
</comment>
<comment type="subunit">
    <text evidence="1">Homodimer. Binds to stalled ribosomes, contacting rRNA.</text>
</comment>
<comment type="similarity">
    <text evidence="1">Belongs to the DNA mismatch repair MutS family. MutS2 subfamily.</text>
</comment>
<sequence>MNKKILETLEFDKVKALFEPHLLTEQGLEQLRQLAPTAKADKIKQAFAEMKEMQALFVEQPHFTILSTKEIAGVCKRLEMGADLNIEEFLLLKRVLLASRELQSFYANLENVSLEELAFWFEKLHDFPQLQGNLQAFNDAGFIENFASEELARIRRKIHDSESQVRDVLQDLLKQKAQMLTEGIVASRNGRQVLPVKNTYRNKIAGVVHDISASGNTVYIEPREVVKLSEEIASLRADERYEMLRILQEISERVRPHAAEIANDAWIIGHLDLIRAKVRFIQERQAVVPQLSENQEIQLLHVCHPLVKNAVANDVYFGQDLTAIVITGPNTGGKTIMLKTLGLTQVMAQSGLPILADKGSRVGIFEEIFADIGDEQSIEQSLSTFSSHMTNIVDILGKVNQHSLLLLDELGAGTDPQEGAALAMAILEDLRLRQIKTMATTHYPELKAYGIETAFVQNASMEFDTATLRPTYRFMQGVPGRSNAFEIAKRLGLSEVIVGDASQQIDQDNDVNRIIEQLEEQTLESRKRLDNIREVEQENLKMNRALKKLYNELNREKETELNKAREQAAEIVDMALSESDQILKNLHSKSQLKPHEIIEAKAKLKKLAPEKVDLSKNKVLQKAKKKRAPKVGDDIVVLSYGQRGTLTSQLKDGRWEAQVGLIKMTLEEKEFDLVQAQQEKAVKKKQVNVVKRTSGRGPQARLDLRGKRYEEAMNELDTFIDQALLNNMAQVDIIHGIGTGVIREGVTKYLQRNKHVKSFGYAPQNAGGSGATIVTFKG</sequence>